<name>KAD_MARMS</name>
<comment type="function">
    <text evidence="1">Catalyzes the reversible transfer of the terminal phosphate group between ATP and AMP. Plays an important role in cellular energy homeostasis and in adenine nucleotide metabolism.</text>
</comment>
<comment type="catalytic activity">
    <reaction evidence="1">
        <text>AMP + ATP = 2 ADP</text>
        <dbReference type="Rhea" id="RHEA:12973"/>
        <dbReference type="ChEBI" id="CHEBI:30616"/>
        <dbReference type="ChEBI" id="CHEBI:456215"/>
        <dbReference type="ChEBI" id="CHEBI:456216"/>
        <dbReference type="EC" id="2.7.4.3"/>
    </reaction>
</comment>
<comment type="pathway">
    <text evidence="1">Purine metabolism; AMP biosynthesis via salvage pathway; AMP from ADP: step 1/1.</text>
</comment>
<comment type="subunit">
    <text evidence="1">Monomer.</text>
</comment>
<comment type="subcellular location">
    <subcellularLocation>
        <location evidence="1">Cytoplasm</location>
    </subcellularLocation>
</comment>
<comment type="domain">
    <text evidence="1">Consists of three domains, a large central CORE domain and two small peripheral domains, NMPbind and LID, which undergo movements during catalysis. The LID domain closes over the site of phosphoryl transfer upon ATP binding. Assembling and dissambling the active center during each catalytic cycle provides an effective means to prevent ATP hydrolysis.</text>
</comment>
<comment type="similarity">
    <text evidence="1">Belongs to the adenylate kinase family.</text>
</comment>
<proteinExistence type="inferred from homology"/>
<evidence type="ECO:0000255" key="1">
    <source>
        <dbReference type="HAMAP-Rule" id="MF_00235"/>
    </source>
</evidence>
<protein>
    <recommendedName>
        <fullName evidence="1">Adenylate kinase</fullName>
        <shortName evidence="1">AK</shortName>
        <ecNumber evidence="1">2.7.4.3</ecNumber>
    </recommendedName>
    <alternativeName>
        <fullName evidence="1">ATP-AMP transphosphorylase</fullName>
    </alternativeName>
    <alternativeName>
        <fullName evidence="1">ATP:AMP phosphotransferase</fullName>
    </alternativeName>
    <alternativeName>
        <fullName evidence="1">Adenylate monophosphate kinase</fullName>
    </alternativeName>
</protein>
<feature type="chain" id="PRO_1000078280" description="Adenylate kinase">
    <location>
        <begin position="1"/>
        <end position="218"/>
    </location>
</feature>
<feature type="region of interest" description="NMP" evidence="1">
    <location>
        <begin position="30"/>
        <end position="59"/>
    </location>
</feature>
<feature type="region of interest" description="LID" evidence="1">
    <location>
        <begin position="122"/>
        <end position="159"/>
    </location>
</feature>
<feature type="binding site" evidence="1">
    <location>
        <begin position="10"/>
        <end position="15"/>
    </location>
    <ligand>
        <name>ATP</name>
        <dbReference type="ChEBI" id="CHEBI:30616"/>
    </ligand>
</feature>
<feature type="binding site" evidence="1">
    <location>
        <position position="31"/>
    </location>
    <ligand>
        <name>AMP</name>
        <dbReference type="ChEBI" id="CHEBI:456215"/>
    </ligand>
</feature>
<feature type="binding site" evidence="1">
    <location>
        <position position="36"/>
    </location>
    <ligand>
        <name>AMP</name>
        <dbReference type="ChEBI" id="CHEBI:456215"/>
    </ligand>
</feature>
<feature type="binding site" evidence="1">
    <location>
        <begin position="57"/>
        <end position="59"/>
    </location>
    <ligand>
        <name>AMP</name>
        <dbReference type="ChEBI" id="CHEBI:456215"/>
    </ligand>
</feature>
<feature type="binding site" evidence="1">
    <location>
        <begin position="85"/>
        <end position="88"/>
    </location>
    <ligand>
        <name>AMP</name>
        <dbReference type="ChEBI" id="CHEBI:456215"/>
    </ligand>
</feature>
<feature type="binding site" evidence="1">
    <location>
        <position position="92"/>
    </location>
    <ligand>
        <name>AMP</name>
        <dbReference type="ChEBI" id="CHEBI:456215"/>
    </ligand>
</feature>
<feature type="binding site" evidence="1">
    <location>
        <position position="123"/>
    </location>
    <ligand>
        <name>ATP</name>
        <dbReference type="ChEBI" id="CHEBI:30616"/>
    </ligand>
</feature>
<feature type="binding site" evidence="1">
    <location>
        <begin position="132"/>
        <end position="133"/>
    </location>
    <ligand>
        <name>ATP</name>
        <dbReference type="ChEBI" id="CHEBI:30616"/>
    </ligand>
</feature>
<feature type="binding site" evidence="1">
    <location>
        <position position="156"/>
    </location>
    <ligand>
        <name>AMP</name>
        <dbReference type="ChEBI" id="CHEBI:456215"/>
    </ligand>
</feature>
<feature type="binding site" evidence="1">
    <location>
        <position position="167"/>
    </location>
    <ligand>
        <name>AMP</name>
        <dbReference type="ChEBI" id="CHEBI:456215"/>
    </ligand>
</feature>
<feature type="binding site" evidence="1">
    <location>
        <position position="203"/>
    </location>
    <ligand>
        <name>ATP</name>
        <dbReference type="ChEBI" id="CHEBI:30616"/>
    </ligand>
</feature>
<dbReference type="EC" id="2.7.4.3" evidence="1"/>
<dbReference type="EMBL" id="CP000749">
    <property type="protein sequence ID" value="ABR70185.1"/>
    <property type="molecule type" value="Genomic_DNA"/>
</dbReference>
<dbReference type="SMR" id="A6VUQ6"/>
<dbReference type="STRING" id="400668.Mmwyl1_1256"/>
<dbReference type="KEGG" id="mmw:Mmwyl1_1256"/>
<dbReference type="eggNOG" id="COG0563">
    <property type="taxonomic scope" value="Bacteria"/>
</dbReference>
<dbReference type="HOGENOM" id="CLU_032354_1_2_6"/>
<dbReference type="OrthoDB" id="9805030at2"/>
<dbReference type="UniPathway" id="UPA00588">
    <property type="reaction ID" value="UER00649"/>
</dbReference>
<dbReference type="GO" id="GO:0005737">
    <property type="term" value="C:cytoplasm"/>
    <property type="evidence" value="ECO:0007669"/>
    <property type="project" value="UniProtKB-SubCell"/>
</dbReference>
<dbReference type="GO" id="GO:0004017">
    <property type="term" value="F:adenylate kinase activity"/>
    <property type="evidence" value="ECO:0007669"/>
    <property type="project" value="UniProtKB-UniRule"/>
</dbReference>
<dbReference type="GO" id="GO:0005524">
    <property type="term" value="F:ATP binding"/>
    <property type="evidence" value="ECO:0007669"/>
    <property type="project" value="UniProtKB-UniRule"/>
</dbReference>
<dbReference type="GO" id="GO:0044209">
    <property type="term" value="P:AMP salvage"/>
    <property type="evidence" value="ECO:0007669"/>
    <property type="project" value="UniProtKB-UniRule"/>
</dbReference>
<dbReference type="CDD" id="cd01428">
    <property type="entry name" value="ADK"/>
    <property type="match status" value="1"/>
</dbReference>
<dbReference type="FunFam" id="3.40.50.300:FF:000106">
    <property type="entry name" value="Adenylate kinase mitochondrial"/>
    <property type="match status" value="1"/>
</dbReference>
<dbReference type="Gene3D" id="3.40.50.300">
    <property type="entry name" value="P-loop containing nucleotide triphosphate hydrolases"/>
    <property type="match status" value="1"/>
</dbReference>
<dbReference type="HAMAP" id="MF_00235">
    <property type="entry name" value="Adenylate_kinase_Adk"/>
    <property type="match status" value="1"/>
</dbReference>
<dbReference type="InterPro" id="IPR006259">
    <property type="entry name" value="Adenyl_kin_sub"/>
</dbReference>
<dbReference type="InterPro" id="IPR000850">
    <property type="entry name" value="Adenylat/UMP-CMP_kin"/>
</dbReference>
<dbReference type="InterPro" id="IPR033690">
    <property type="entry name" value="Adenylat_kinase_CS"/>
</dbReference>
<dbReference type="InterPro" id="IPR007862">
    <property type="entry name" value="Adenylate_kinase_lid-dom"/>
</dbReference>
<dbReference type="InterPro" id="IPR027417">
    <property type="entry name" value="P-loop_NTPase"/>
</dbReference>
<dbReference type="NCBIfam" id="TIGR01351">
    <property type="entry name" value="adk"/>
    <property type="match status" value="1"/>
</dbReference>
<dbReference type="NCBIfam" id="NF001379">
    <property type="entry name" value="PRK00279.1-1"/>
    <property type="match status" value="1"/>
</dbReference>
<dbReference type="NCBIfam" id="NF001380">
    <property type="entry name" value="PRK00279.1-2"/>
    <property type="match status" value="1"/>
</dbReference>
<dbReference type="NCBIfam" id="NF001381">
    <property type="entry name" value="PRK00279.1-3"/>
    <property type="match status" value="1"/>
</dbReference>
<dbReference type="NCBIfam" id="NF011100">
    <property type="entry name" value="PRK14527.1"/>
    <property type="match status" value="1"/>
</dbReference>
<dbReference type="PANTHER" id="PTHR23359">
    <property type="entry name" value="NUCLEOTIDE KINASE"/>
    <property type="match status" value="1"/>
</dbReference>
<dbReference type="Pfam" id="PF00406">
    <property type="entry name" value="ADK"/>
    <property type="match status" value="1"/>
</dbReference>
<dbReference type="Pfam" id="PF05191">
    <property type="entry name" value="ADK_lid"/>
    <property type="match status" value="1"/>
</dbReference>
<dbReference type="PRINTS" id="PR00094">
    <property type="entry name" value="ADENYLTKNASE"/>
</dbReference>
<dbReference type="SUPFAM" id="SSF52540">
    <property type="entry name" value="P-loop containing nucleoside triphosphate hydrolases"/>
    <property type="match status" value="1"/>
</dbReference>
<dbReference type="PROSITE" id="PS00113">
    <property type="entry name" value="ADENYLATE_KINASE"/>
    <property type="match status" value="1"/>
</dbReference>
<keyword id="KW-0067">ATP-binding</keyword>
<keyword id="KW-0963">Cytoplasm</keyword>
<keyword id="KW-0418">Kinase</keyword>
<keyword id="KW-0545">Nucleotide biosynthesis</keyword>
<keyword id="KW-0547">Nucleotide-binding</keyword>
<keyword id="KW-0808">Transferase</keyword>
<reference key="1">
    <citation type="submission" date="2007-06" db="EMBL/GenBank/DDBJ databases">
        <title>Complete sequence of Marinomonas sp. MWYL1.</title>
        <authorList>
            <consortium name="US DOE Joint Genome Institute"/>
            <person name="Copeland A."/>
            <person name="Lucas S."/>
            <person name="Lapidus A."/>
            <person name="Barry K."/>
            <person name="Glavina del Rio T."/>
            <person name="Dalin E."/>
            <person name="Tice H."/>
            <person name="Pitluck S."/>
            <person name="Kiss H."/>
            <person name="Brettin T."/>
            <person name="Bruce D."/>
            <person name="Detter J.C."/>
            <person name="Han C."/>
            <person name="Schmutz J."/>
            <person name="Larimer F."/>
            <person name="Land M."/>
            <person name="Hauser L."/>
            <person name="Kyrpides N."/>
            <person name="Kim E."/>
            <person name="Johnston A.W.B."/>
            <person name="Todd J.D."/>
            <person name="Rogers R."/>
            <person name="Wexler M."/>
            <person name="Bond P.L."/>
            <person name="Li Y."/>
            <person name="Richardson P."/>
        </authorList>
    </citation>
    <scope>NUCLEOTIDE SEQUENCE [LARGE SCALE GENOMIC DNA]</scope>
    <source>
        <strain>MWYL1</strain>
    </source>
</reference>
<gene>
    <name evidence="1" type="primary">adk</name>
    <name type="ordered locus">Mmwyl1_1256</name>
</gene>
<organism>
    <name type="scientific">Marinomonas sp. (strain MWYL1)</name>
    <dbReference type="NCBI Taxonomy" id="400668"/>
    <lineage>
        <taxon>Bacteria</taxon>
        <taxon>Pseudomonadati</taxon>
        <taxon>Pseudomonadota</taxon>
        <taxon>Gammaproteobacteria</taxon>
        <taxon>Oceanospirillales</taxon>
        <taxon>Oceanospirillaceae</taxon>
        <taxon>Marinomonas</taxon>
    </lineage>
</organism>
<accession>A6VUQ6</accession>
<sequence>MRVILLGAPGAGKGTQAQFITEEFGIPQISTGDMLRAAVKAGSEMGLKAKAVMDAGQLVSDDIIIGLVKERLTQDDCANGALFDGFPRTIPQADALKDAGVEIDYVVEIDVADEEIVKRMSGRRVHEASGRTYHLVYNPPKVEGKDDVTGEDLVQRADDTEETVRLRLGVYHDQTAPLIGYYQDWLKADSATAPKFVKVNGIGDLNEIKQSLLASLKA</sequence>